<name>REX_PEDPA</name>
<keyword id="KW-0963">Cytoplasm</keyword>
<keyword id="KW-0238">DNA-binding</keyword>
<keyword id="KW-0520">NAD</keyword>
<keyword id="KW-0678">Repressor</keyword>
<keyword id="KW-0804">Transcription</keyword>
<keyword id="KW-0805">Transcription regulation</keyword>
<organism>
    <name type="scientific">Pediococcus pentosaceus (strain ATCC 25745 / CCUG 21536 / LMG 10740 / 183-1w)</name>
    <dbReference type="NCBI Taxonomy" id="278197"/>
    <lineage>
        <taxon>Bacteria</taxon>
        <taxon>Bacillati</taxon>
        <taxon>Bacillota</taxon>
        <taxon>Bacilli</taxon>
        <taxon>Lactobacillales</taxon>
        <taxon>Lactobacillaceae</taxon>
        <taxon>Pediococcus</taxon>
    </lineage>
</organism>
<evidence type="ECO:0000255" key="1">
    <source>
        <dbReference type="HAMAP-Rule" id="MF_01131"/>
    </source>
</evidence>
<accession>Q03E71</accession>
<dbReference type="EMBL" id="CP000422">
    <property type="protein sequence ID" value="ABJ68501.1"/>
    <property type="molecule type" value="Genomic_DNA"/>
</dbReference>
<dbReference type="RefSeq" id="WP_002833282.1">
    <property type="nucleotide sequence ID" value="NC_008525.1"/>
</dbReference>
<dbReference type="SMR" id="Q03E71"/>
<dbReference type="STRING" id="278197.PEPE_1470"/>
<dbReference type="GeneID" id="33062869"/>
<dbReference type="KEGG" id="ppe:PEPE_1470"/>
<dbReference type="eggNOG" id="COG2344">
    <property type="taxonomic scope" value="Bacteria"/>
</dbReference>
<dbReference type="HOGENOM" id="CLU_061534_1_1_9"/>
<dbReference type="OrthoDB" id="9784760at2"/>
<dbReference type="Proteomes" id="UP000000773">
    <property type="component" value="Chromosome"/>
</dbReference>
<dbReference type="GO" id="GO:0005737">
    <property type="term" value="C:cytoplasm"/>
    <property type="evidence" value="ECO:0007669"/>
    <property type="project" value="UniProtKB-SubCell"/>
</dbReference>
<dbReference type="GO" id="GO:0003677">
    <property type="term" value="F:DNA binding"/>
    <property type="evidence" value="ECO:0007669"/>
    <property type="project" value="UniProtKB-UniRule"/>
</dbReference>
<dbReference type="GO" id="GO:0003700">
    <property type="term" value="F:DNA-binding transcription factor activity"/>
    <property type="evidence" value="ECO:0007669"/>
    <property type="project" value="UniProtKB-UniRule"/>
</dbReference>
<dbReference type="GO" id="GO:0045892">
    <property type="term" value="P:negative regulation of DNA-templated transcription"/>
    <property type="evidence" value="ECO:0007669"/>
    <property type="project" value="InterPro"/>
</dbReference>
<dbReference type="GO" id="GO:0051775">
    <property type="term" value="P:response to redox state"/>
    <property type="evidence" value="ECO:0007669"/>
    <property type="project" value="InterPro"/>
</dbReference>
<dbReference type="Gene3D" id="3.40.50.720">
    <property type="entry name" value="NAD(P)-binding Rossmann-like Domain"/>
    <property type="match status" value="1"/>
</dbReference>
<dbReference type="Gene3D" id="1.10.10.10">
    <property type="entry name" value="Winged helix-like DNA-binding domain superfamily/Winged helix DNA-binding domain"/>
    <property type="match status" value="1"/>
</dbReference>
<dbReference type="HAMAP" id="MF_01131">
    <property type="entry name" value="Rex"/>
    <property type="match status" value="1"/>
</dbReference>
<dbReference type="InterPro" id="IPR003781">
    <property type="entry name" value="CoA-bd"/>
</dbReference>
<dbReference type="InterPro" id="IPR036291">
    <property type="entry name" value="NAD(P)-bd_dom_sf"/>
</dbReference>
<dbReference type="InterPro" id="IPR009718">
    <property type="entry name" value="Rex_DNA-bd_C_dom"/>
</dbReference>
<dbReference type="InterPro" id="IPR022876">
    <property type="entry name" value="Tscrpt_rep_Rex"/>
</dbReference>
<dbReference type="InterPro" id="IPR036388">
    <property type="entry name" value="WH-like_DNA-bd_sf"/>
</dbReference>
<dbReference type="InterPro" id="IPR036390">
    <property type="entry name" value="WH_DNA-bd_sf"/>
</dbReference>
<dbReference type="NCBIfam" id="NF003989">
    <property type="entry name" value="PRK05472.1-3"/>
    <property type="match status" value="1"/>
</dbReference>
<dbReference type="NCBIfam" id="NF003991">
    <property type="entry name" value="PRK05472.1-5"/>
    <property type="match status" value="1"/>
</dbReference>
<dbReference type="NCBIfam" id="NF003994">
    <property type="entry name" value="PRK05472.2-3"/>
    <property type="match status" value="1"/>
</dbReference>
<dbReference type="NCBIfam" id="NF003995">
    <property type="entry name" value="PRK05472.2-4"/>
    <property type="match status" value="1"/>
</dbReference>
<dbReference type="NCBIfam" id="NF003996">
    <property type="entry name" value="PRK05472.2-5"/>
    <property type="match status" value="1"/>
</dbReference>
<dbReference type="PANTHER" id="PTHR35786">
    <property type="entry name" value="REDOX-SENSING TRANSCRIPTIONAL REPRESSOR REX"/>
    <property type="match status" value="1"/>
</dbReference>
<dbReference type="PANTHER" id="PTHR35786:SF1">
    <property type="entry name" value="REDOX-SENSING TRANSCRIPTIONAL REPRESSOR REX 1"/>
    <property type="match status" value="1"/>
</dbReference>
<dbReference type="Pfam" id="PF02629">
    <property type="entry name" value="CoA_binding"/>
    <property type="match status" value="1"/>
</dbReference>
<dbReference type="Pfam" id="PF06971">
    <property type="entry name" value="Put_DNA-bind_N"/>
    <property type="match status" value="1"/>
</dbReference>
<dbReference type="SMART" id="SM00881">
    <property type="entry name" value="CoA_binding"/>
    <property type="match status" value="1"/>
</dbReference>
<dbReference type="SUPFAM" id="SSF51735">
    <property type="entry name" value="NAD(P)-binding Rossmann-fold domains"/>
    <property type="match status" value="1"/>
</dbReference>
<dbReference type="SUPFAM" id="SSF46785">
    <property type="entry name" value="Winged helix' DNA-binding domain"/>
    <property type="match status" value="1"/>
</dbReference>
<protein>
    <recommendedName>
        <fullName evidence="1">Redox-sensing transcriptional repressor Rex</fullName>
    </recommendedName>
</protein>
<proteinExistence type="inferred from homology"/>
<feature type="chain" id="PRO_1000065413" description="Redox-sensing transcriptional repressor Rex">
    <location>
        <begin position="1"/>
        <end position="208"/>
    </location>
</feature>
<feature type="DNA-binding region" description="H-T-H motif" evidence="1">
    <location>
        <begin position="16"/>
        <end position="55"/>
    </location>
</feature>
<feature type="binding site" evidence="1">
    <location>
        <begin position="90"/>
        <end position="95"/>
    </location>
    <ligand>
        <name>NAD(+)</name>
        <dbReference type="ChEBI" id="CHEBI:57540"/>
    </ligand>
</feature>
<comment type="function">
    <text evidence="1">Modulates transcription in response to changes in cellular NADH/NAD(+) redox state.</text>
</comment>
<comment type="subunit">
    <text evidence="1">Homodimer.</text>
</comment>
<comment type="subcellular location">
    <subcellularLocation>
        <location evidence="1">Cytoplasm</location>
    </subcellularLocation>
</comment>
<comment type="similarity">
    <text evidence="1">Belongs to the transcriptional regulatory Rex family.</text>
</comment>
<gene>
    <name evidence="1" type="primary">rex</name>
    <name type="ordered locus">PEPE_1470</name>
</gene>
<reference key="1">
    <citation type="journal article" date="2006" name="Proc. Natl. Acad. Sci. U.S.A.">
        <title>Comparative genomics of the lactic acid bacteria.</title>
        <authorList>
            <person name="Makarova K.S."/>
            <person name="Slesarev A."/>
            <person name="Wolf Y.I."/>
            <person name="Sorokin A."/>
            <person name="Mirkin B."/>
            <person name="Koonin E.V."/>
            <person name="Pavlov A."/>
            <person name="Pavlova N."/>
            <person name="Karamychev V."/>
            <person name="Polouchine N."/>
            <person name="Shakhova V."/>
            <person name="Grigoriev I."/>
            <person name="Lou Y."/>
            <person name="Rohksar D."/>
            <person name="Lucas S."/>
            <person name="Huang K."/>
            <person name="Goodstein D.M."/>
            <person name="Hawkins T."/>
            <person name="Plengvidhya V."/>
            <person name="Welker D."/>
            <person name="Hughes J."/>
            <person name="Goh Y."/>
            <person name="Benson A."/>
            <person name="Baldwin K."/>
            <person name="Lee J.-H."/>
            <person name="Diaz-Muniz I."/>
            <person name="Dosti B."/>
            <person name="Smeianov V."/>
            <person name="Wechter W."/>
            <person name="Barabote R."/>
            <person name="Lorca G."/>
            <person name="Altermann E."/>
            <person name="Barrangou R."/>
            <person name="Ganesan B."/>
            <person name="Xie Y."/>
            <person name="Rawsthorne H."/>
            <person name="Tamir D."/>
            <person name="Parker C."/>
            <person name="Breidt F."/>
            <person name="Broadbent J.R."/>
            <person name="Hutkins R."/>
            <person name="O'Sullivan D."/>
            <person name="Steele J."/>
            <person name="Unlu G."/>
            <person name="Saier M.H. Jr."/>
            <person name="Klaenhammer T."/>
            <person name="Richardson P."/>
            <person name="Kozyavkin S."/>
            <person name="Weimer B.C."/>
            <person name="Mills D.A."/>
        </authorList>
    </citation>
    <scope>NUCLEOTIDE SEQUENCE [LARGE SCALE GENOMIC DNA]</scope>
    <source>
        <strain>ATCC 25745 / CCUG 21536 / LMG 10740 / 183-1w</strain>
    </source>
</reference>
<sequence>MDDNKISLATTRRLPLYYRCLSELNEKGEDKVSSAVLERLLKIDAATVRRDFSYFGQMGRRGYGYDVKILLELFNDVLKQDTAANVAIVGVGNLGHALINFKFHKTGNARIKMAFDVNPEVVGTIQSEVPVYDINEIKQRVRDEKIEVAILTVPNSQAQRVTDLLVEAGIKGIMNFTTEIIDVPYNVTIHDVDLSLELQALIYSMDQD</sequence>